<keyword id="KW-0225">Disease variant</keyword>
<keyword id="KW-0472">Membrane</keyword>
<keyword id="KW-0496">Mitochondrion</keyword>
<keyword id="KW-0999">Mitochondrion inner membrane</keyword>
<keyword id="KW-1274">Primary mitochondrial disease</keyword>
<keyword id="KW-1267">Proteomics identification</keyword>
<keyword id="KW-1185">Reference proteome</keyword>
<keyword id="KW-0809">Transit peptide</keyword>
<keyword id="KW-0812">Transmembrane</keyword>
<keyword id="KW-1133">Transmembrane helix</keyword>
<organism>
    <name type="scientific">Homo sapiens</name>
    <name type="common">Human</name>
    <dbReference type="NCBI Taxonomy" id="9606"/>
    <lineage>
        <taxon>Eukaryota</taxon>
        <taxon>Metazoa</taxon>
        <taxon>Chordata</taxon>
        <taxon>Craniata</taxon>
        <taxon>Vertebrata</taxon>
        <taxon>Euteleostomi</taxon>
        <taxon>Mammalia</taxon>
        <taxon>Eutheria</taxon>
        <taxon>Euarchontoglires</taxon>
        <taxon>Primates</taxon>
        <taxon>Haplorrhini</taxon>
        <taxon>Catarrhini</taxon>
        <taxon>Hominidae</taxon>
        <taxon>Homo</taxon>
    </lineage>
</organism>
<comment type="function">
    <text evidence="4 5">Plays an essential role in mitochondrial complex IV maturation and assembly.</text>
</comment>
<comment type="subunit">
    <text evidence="3">Interacts with COX7A2.</text>
</comment>
<comment type="subcellular location">
    <subcellularLocation>
        <location evidence="6">Membrane</location>
        <topology evidence="6">Single-pass membrane protein</topology>
    </subcellularLocation>
    <subcellularLocation>
        <location evidence="1">Mitochondrion</location>
    </subcellularLocation>
    <subcellularLocation>
        <location evidence="4">Mitochondrion inner membrane</location>
    </subcellularLocation>
</comment>
<comment type="disease" evidence="4 5">
    <disease id="DI-05934">
        <name>Mitochondrial complex IV deficiency, nuclear type 12</name>
        <acronym>MC4DN12</acronym>
        <description>An autosomal recessive mitochondrial disorder with onset in early infancy. MC4DN12 features include poor overall growth, metabolic acidosis, profoundly delayed psychomotor development, seizures, hypotonia, and brain abnormalities. Death may occur in the first years of life. Serum lactate and creatine kinase levels are increased. Patient tissues show decreased levels and activity of mitochondrial respiratory complex IV.</description>
        <dbReference type="MIM" id="619055"/>
    </disease>
    <text>The disease is caused by variants affecting the gene represented in this entry.</text>
</comment>
<comment type="similarity">
    <text evidence="6">Belongs to the PET100 family.</text>
</comment>
<name>PT100_HUMAN</name>
<protein>
    <recommendedName>
        <fullName>Protein PET100 homolog, mitochondrial</fullName>
    </recommendedName>
</protein>
<sequence>MGVKLEIFRMIIYLTFPVAMFWVSNQAEWFEDDVIQRKRELWPPEKLQEIEEFKERLRKRREEKLLRDAQQNS</sequence>
<feature type="transit peptide" description="Mitochondrion">
    <location>
        <begin position="1"/>
        <end status="unknown"/>
    </location>
</feature>
<feature type="chain" id="PRO_0000413099" description="Protein PET100 homolog, mitochondrial">
    <location>
        <begin status="unknown"/>
        <end position="73"/>
    </location>
</feature>
<feature type="transmembrane region" description="Helical" evidence="2">
    <location>
        <begin position="7"/>
        <end position="24"/>
    </location>
</feature>
<feature type="sequence variant" id="VAR_084179" description="In MC4DN12; results in impaired complex IV assembly." evidence="5">
    <location>
        <begin position="48"/>
        <end position="73"/>
    </location>
</feature>
<evidence type="ECO:0000250" key="1">
    <source>
        <dbReference type="UniProtKB" id="P0DJE0"/>
    </source>
</evidence>
<evidence type="ECO:0000255" key="2"/>
<evidence type="ECO:0000269" key="3">
    <source>
    </source>
</evidence>
<evidence type="ECO:0000269" key="4">
    <source>
    </source>
</evidence>
<evidence type="ECO:0000269" key="5">
    <source>
    </source>
</evidence>
<evidence type="ECO:0000305" key="6"/>
<dbReference type="EMBL" id="AC008763">
    <property type="status" value="NOT_ANNOTATED_CDS"/>
    <property type="molecule type" value="Genomic_DNA"/>
</dbReference>
<dbReference type="EMBL" id="BC150496">
    <property type="status" value="NOT_ANNOTATED_CDS"/>
    <property type="molecule type" value="mRNA"/>
</dbReference>
<dbReference type="CCDS" id="CCDS54208.1"/>
<dbReference type="RefSeq" id="NP_001164626.1">
    <property type="nucleotide sequence ID" value="NM_001171155.2"/>
</dbReference>
<dbReference type="BioGRID" id="935494">
    <property type="interactions" value="2"/>
</dbReference>
<dbReference type="CORUM" id="P0DJ07"/>
<dbReference type="FunCoup" id="P0DJ07">
    <property type="interactions" value="80"/>
</dbReference>
<dbReference type="STRING" id="9606.ENSP00000470539"/>
<dbReference type="iPTMnet" id="P0DJ07"/>
<dbReference type="PhosphoSitePlus" id="P0DJ07"/>
<dbReference type="BioMuta" id="PET100"/>
<dbReference type="DMDM" id="353558869"/>
<dbReference type="jPOST" id="P0DJ07"/>
<dbReference type="MassIVE" id="P0DJ07"/>
<dbReference type="PaxDb" id="9606-ENSP00000470539"/>
<dbReference type="PeptideAtlas" id="P0DJ07"/>
<dbReference type="ProteomicsDB" id="52536"/>
<dbReference type="Pumba" id="P0DJ07"/>
<dbReference type="TopDownProteomics" id="P0DJ07"/>
<dbReference type="Antibodypedia" id="77906">
    <property type="antibodies" value="27 antibodies from 7 providers"/>
</dbReference>
<dbReference type="DNASU" id="100131801"/>
<dbReference type="Ensembl" id="ENST00000594797.6">
    <property type="protein sequence ID" value="ENSP00000470539.1"/>
    <property type="gene ID" value="ENSG00000229833.11"/>
</dbReference>
<dbReference type="GeneID" id="100131801"/>
<dbReference type="KEGG" id="hsa:100131801"/>
<dbReference type="MANE-Select" id="ENST00000594797.6">
    <property type="protein sequence ID" value="ENSP00000470539.1"/>
    <property type="RefSeq nucleotide sequence ID" value="NM_001171155.2"/>
    <property type="RefSeq protein sequence ID" value="NP_001164626.1"/>
</dbReference>
<dbReference type="UCSC" id="uc010dvi.3">
    <property type="organism name" value="human"/>
</dbReference>
<dbReference type="AGR" id="HGNC:40038"/>
<dbReference type="CTD" id="100131801"/>
<dbReference type="DisGeNET" id="100131801"/>
<dbReference type="GeneCards" id="PET100"/>
<dbReference type="HGNC" id="HGNC:40038">
    <property type="gene designation" value="PET100"/>
</dbReference>
<dbReference type="HPA" id="ENSG00000229833">
    <property type="expression patterns" value="Tissue enhanced (choroid)"/>
</dbReference>
<dbReference type="MalaCards" id="PET100"/>
<dbReference type="MIM" id="614770">
    <property type="type" value="gene"/>
</dbReference>
<dbReference type="MIM" id="619055">
    <property type="type" value="phenotype"/>
</dbReference>
<dbReference type="neXtProt" id="NX_P0DJ07"/>
<dbReference type="OpenTargets" id="ENSG00000229833"/>
<dbReference type="VEuPathDB" id="HostDB:ENSG00000229833"/>
<dbReference type="eggNOG" id="KOG4702">
    <property type="taxonomic scope" value="Eukaryota"/>
</dbReference>
<dbReference type="GeneTree" id="ENSGT00390000016884"/>
<dbReference type="HOGENOM" id="CLU_194764_0_0_1"/>
<dbReference type="InParanoid" id="P0DJ07"/>
<dbReference type="OMA" id="MALYMTF"/>
<dbReference type="OrthoDB" id="18175at2759"/>
<dbReference type="PAN-GO" id="P0DJ07">
    <property type="GO annotations" value="3 GO annotations based on evolutionary models"/>
</dbReference>
<dbReference type="PhylomeDB" id="P0DJ07"/>
<dbReference type="TreeFam" id="TF314727"/>
<dbReference type="PathwayCommons" id="P0DJ07"/>
<dbReference type="Reactome" id="R-HSA-9864848">
    <property type="pathway name" value="Complex IV assembly"/>
</dbReference>
<dbReference type="BioGRID-ORCS" id="100131801">
    <property type="hits" value="56 hits in 1160 CRISPR screens"/>
</dbReference>
<dbReference type="ChiTaRS" id="PET100">
    <property type="organism name" value="human"/>
</dbReference>
<dbReference type="Pharos" id="P0DJ07">
    <property type="development level" value="Tbio"/>
</dbReference>
<dbReference type="PRO" id="PR:P0DJ07"/>
<dbReference type="Proteomes" id="UP000005640">
    <property type="component" value="Chromosome 19"/>
</dbReference>
<dbReference type="RNAct" id="P0DJ07">
    <property type="molecule type" value="protein"/>
</dbReference>
<dbReference type="Bgee" id="ENSG00000229833">
    <property type="expression patterns" value="Expressed in bone marrow cell and 104 other cell types or tissues"/>
</dbReference>
<dbReference type="ExpressionAtlas" id="P0DJ07">
    <property type="expression patterns" value="baseline and differential"/>
</dbReference>
<dbReference type="GO" id="GO:0005743">
    <property type="term" value="C:mitochondrial inner membrane"/>
    <property type="evidence" value="ECO:0000318"/>
    <property type="project" value="GO_Central"/>
</dbReference>
<dbReference type="GO" id="GO:0005739">
    <property type="term" value="C:mitochondrion"/>
    <property type="evidence" value="ECO:0006056"/>
    <property type="project" value="FlyBase"/>
</dbReference>
<dbReference type="GO" id="GO:0051082">
    <property type="term" value="F:unfolded protein binding"/>
    <property type="evidence" value="ECO:0000318"/>
    <property type="project" value="GO_Central"/>
</dbReference>
<dbReference type="GO" id="GO:0033617">
    <property type="term" value="P:mitochondrial cytochrome c oxidase assembly"/>
    <property type="evidence" value="ECO:0000318"/>
    <property type="project" value="GO_Central"/>
</dbReference>
<dbReference type="InterPro" id="IPR018625">
    <property type="entry name" value="Pet100"/>
</dbReference>
<dbReference type="PANTHER" id="PTHR33968">
    <property type="entry name" value="PROTEIN PET100 HOMOLOG, MITOCHONDRIAL"/>
    <property type="match status" value="1"/>
</dbReference>
<dbReference type="PANTHER" id="PTHR33968:SF1">
    <property type="entry name" value="PROTEIN PET100 HOMOLOG, MITOCHONDRIAL"/>
    <property type="match status" value="1"/>
</dbReference>
<dbReference type="Pfam" id="PF09803">
    <property type="entry name" value="Pet100"/>
    <property type="match status" value="1"/>
</dbReference>
<accession>P0DJ07</accession>
<reference key="1">
    <citation type="journal article" date="2004" name="Nature">
        <title>The DNA sequence and biology of human chromosome 19.</title>
        <authorList>
            <person name="Grimwood J."/>
            <person name="Gordon L.A."/>
            <person name="Olsen A.S."/>
            <person name="Terry A."/>
            <person name="Schmutz J."/>
            <person name="Lamerdin J.E."/>
            <person name="Hellsten U."/>
            <person name="Goodstein D."/>
            <person name="Couronne O."/>
            <person name="Tran-Gyamfi M."/>
            <person name="Aerts A."/>
            <person name="Altherr M."/>
            <person name="Ashworth L."/>
            <person name="Bajorek E."/>
            <person name="Black S."/>
            <person name="Branscomb E."/>
            <person name="Caenepeel S."/>
            <person name="Carrano A.V."/>
            <person name="Caoile C."/>
            <person name="Chan Y.M."/>
            <person name="Christensen M."/>
            <person name="Cleland C.A."/>
            <person name="Copeland A."/>
            <person name="Dalin E."/>
            <person name="Dehal P."/>
            <person name="Denys M."/>
            <person name="Detter J.C."/>
            <person name="Escobar J."/>
            <person name="Flowers D."/>
            <person name="Fotopulos D."/>
            <person name="Garcia C."/>
            <person name="Georgescu A.M."/>
            <person name="Glavina T."/>
            <person name="Gomez M."/>
            <person name="Gonzales E."/>
            <person name="Groza M."/>
            <person name="Hammon N."/>
            <person name="Hawkins T."/>
            <person name="Haydu L."/>
            <person name="Ho I."/>
            <person name="Huang W."/>
            <person name="Israni S."/>
            <person name="Jett J."/>
            <person name="Kadner K."/>
            <person name="Kimball H."/>
            <person name="Kobayashi A."/>
            <person name="Larionov V."/>
            <person name="Leem S.-H."/>
            <person name="Lopez F."/>
            <person name="Lou Y."/>
            <person name="Lowry S."/>
            <person name="Malfatti S."/>
            <person name="Martinez D."/>
            <person name="McCready P.M."/>
            <person name="Medina C."/>
            <person name="Morgan J."/>
            <person name="Nelson K."/>
            <person name="Nolan M."/>
            <person name="Ovcharenko I."/>
            <person name="Pitluck S."/>
            <person name="Pollard M."/>
            <person name="Popkie A.P."/>
            <person name="Predki P."/>
            <person name="Quan G."/>
            <person name="Ramirez L."/>
            <person name="Rash S."/>
            <person name="Retterer J."/>
            <person name="Rodriguez A."/>
            <person name="Rogers S."/>
            <person name="Salamov A."/>
            <person name="Salazar A."/>
            <person name="She X."/>
            <person name="Smith D."/>
            <person name="Slezak T."/>
            <person name="Solovyev V."/>
            <person name="Thayer N."/>
            <person name="Tice H."/>
            <person name="Tsai M."/>
            <person name="Ustaszewska A."/>
            <person name="Vo N."/>
            <person name="Wagner M."/>
            <person name="Wheeler J."/>
            <person name="Wu K."/>
            <person name="Xie G."/>
            <person name="Yang J."/>
            <person name="Dubchak I."/>
            <person name="Furey T.S."/>
            <person name="DeJong P."/>
            <person name="Dickson M."/>
            <person name="Gordon D."/>
            <person name="Eichler E.E."/>
            <person name="Pennacchio L.A."/>
            <person name="Richardson P."/>
            <person name="Stubbs L."/>
            <person name="Rokhsar D.S."/>
            <person name="Myers R.M."/>
            <person name="Rubin E.M."/>
            <person name="Lucas S.M."/>
        </authorList>
    </citation>
    <scope>NUCLEOTIDE SEQUENCE [LARGE SCALE GENOMIC DNA]</scope>
</reference>
<reference key="2">
    <citation type="journal article" date="2004" name="Genome Res.">
        <title>The status, quality, and expansion of the NIH full-length cDNA project: the Mammalian Gene Collection (MGC).</title>
        <authorList>
            <consortium name="The MGC Project Team"/>
        </authorList>
    </citation>
    <scope>NUCLEOTIDE SEQUENCE [LARGE SCALE MRNA]</scope>
</reference>
<reference key="3">
    <citation type="journal article" date="2012" name="Genome Biol.">
        <title>Iterative orthology prediction uncovers new mitochondrial proteins and identifies C12orf62 as the human ortholog of COX14, a protein involved in the assembly of cytochrome c oxidase.</title>
        <authorList>
            <person name="Szklarczyk R."/>
            <person name="Wanschers B.F."/>
            <person name="Cuypers T.D."/>
            <person name="Esseling J.J."/>
            <person name="Riemersma M."/>
            <person name="van den Brand M.A."/>
            <person name="Gloerich J."/>
            <person name="Lasonder E."/>
            <person name="van den Heuvel L.P."/>
            <person name="Nijtmans L.G."/>
            <person name="Huynen M.A."/>
        </authorList>
    </citation>
    <scope>INTERACTION WITH COX7A2</scope>
</reference>
<reference key="4">
    <citation type="journal article" date="2014" name="Am. J. Hum. Genet.">
        <title>A founder mutation in PET100 causes isolated complex IV deficiency in Lebanese individuals with Leigh syndrome.</title>
        <authorList>
            <person name="Lim S.C."/>
            <person name="Smith K.R."/>
            <person name="Stroud D.A."/>
            <person name="Compton A.G."/>
            <person name="Tucker E.J."/>
            <person name="Dasvarma A."/>
            <person name="Gandolfo L.C."/>
            <person name="Marum J.E."/>
            <person name="McKenzie M."/>
            <person name="Peters H.L."/>
            <person name="Mowat D."/>
            <person name="Procopis P.G."/>
            <person name="Wilcken B."/>
            <person name="Christodoulou J."/>
            <person name="Brown G.K."/>
            <person name="Ryan M.T."/>
            <person name="Bahlo M."/>
            <person name="Thorburn D.R."/>
        </authorList>
    </citation>
    <scope>FUNCTION</scope>
    <scope>SUBCELLULAR LOCATION</scope>
    <scope>INVOLVEMENT IN MC4DN12</scope>
</reference>
<reference key="5">
    <citation type="journal article" date="2015" name="Eur. J. Hum. Genet.">
        <title>A truncating PET100 variant causing fatal infantile lactic acidosis and isolated cytochrome c oxidase deficiency.</title>
        <authorList>
            <person name="Olahova M."/>
            <person name="Haack T.B."/>
            <person name="Alston C.L."/>
            <person name="Houghton J.A."/>
            <person name="He L."/>
            <person name="Morris A.A."/>
            <person name="Brown G.K."/>
            <person name="McFarland R."/>
            <person name="Chrzanowska-Lightowlers Z.M."/>
            <person name="Lightowlers R.N."/>
            <person name="Prokisch H."/>
            <person name="Taylor R.W."/>
        </authorList>
    </citation>
    <scope>FUNCTION</scope>
    <scope>INVOLVEMENT IN MC4DN12</scope>
    <scope>VARIANT MC4DN12 48-GLN--SER-73 DEL</scope>
    <scope>CHARACTERIZATION OF VARIANT MC4DN12 48-GLN--SER-73 DEL</scope>
</reference>
<gene>
    <name type="primary">PET100</name>
    <name type="synonym">C19orf79</name>
</gene>
<proteinExistence type="evidence at protein level"/>